<organism>
    <name type="scientific">Burkholderia mallei (strain ATCC 23344)</name>
    <dbReference type="NCBI Taxonomy" id="243160"/>
    <lineage>
        <taxon>Bacteria</taxon>
        <taxon>Pseudomonadati</taxon>
        <taxon>Pseudomonadota</taxon>
        <taxon>Betaproteobacteria</taxon>
        <taxon>Burkholderiales</taxon>
        <taxon>Burkholderiaceae</taxon>
        <taxon>Burkholderia</taxon>
        <taxon>pseudomallei group</taxon>
    </lineage>
</organism>
<keyword id="KW-1003">Cell membrane</keyword>
<keyword id="KW-0210">Decarboxylase</keyword>
<keyword id="KW-0444">Lipid biosynthesis</keyword>
<keyword id="KW-0443">Lipid metabolism</keyword>
<keyword id="KW-0456">Lyase</keyword>
<keyword id="KW-0472">Membrane</keyword>
<keyword id="KW-0594">Phospholipid biosynthesis</keyword>
<keyword id="KW-1208">Phospholipid metabolism</keyword>
<keyword id="KW-0670">Pyruvate</keyword>
<keyword id="KW-1185">Reference proteome</keyword>
<keyword id="KW-0865">Zymogen</keyword>
<sequence>MNYPHPIIAREGWPFIAIAAVVALLIHAVGGFGLAWPFWLLLVFVVQFFRDPPRAVPTQANAVLCPADGRIVAVETAHDPYADREALKISVFMNVFNVHSQRSPVDGAVQKVEYFPGAFLNAALDKASAENERNAVVIQTGAGHTVTAVQIAGLVARRILCYVRAGEPLSRGQRYGFIRFGSRVDVYLPKGSRARVSIGEKVSASSTILAELPEQP</sequence>
<proteinExistence type="inferred from homology"/>
<name>PSD_BURMA</name>
<comment type="function">
    <text evidence="1">Catalyzes the formation of phosphatidylethanolamine (PtdEtn) from phosphatidylserine (PtdSer).</text>
</comment>
<comment type="catalytic activity">
    <reaction evidence="1">
        <text>a 1,2-diacyl-sn-glycero-3-phospho-L-serine + H(+) = a 1,2-diacyl-sn-glycero-3-phosphoethanolamine + CO2</text>
        <dbReference type="Rhea" id="RHEA:20828"/>
        <dbReference type="ChEBI" id="CHEBI:15378"/>
        <dbReference type="ChEBI" id="CHEBI:16526"/>
        <dbReference type="ChEBI" id="CHEBI:57262"/>
        <dbReference type="ChEBI" id="CHEBI:64612"/>
        <dbReference type="EC" id="4.1.1.65"/>
    </reaction>
</comment>
<comment type="cofactor">
    <cofactor evidence="1">
        <name>pyruvate</name>
        <dbReference type="ChEBI" id="CHEBI:15361"/>
    </cofactor>
    <text evidence="1">Binds 1 pyruvoyl group covalently per subunit.</text>
</comment>
<comment type="pathway">
    <text evidence="1">Phospholipid metabolism; phosphatidylethanolamine biosynthesis; phosphatidylethanolamine from CDP-diacylglycerol: step 2/2.</text>
</comment>
<comment type="subunit">
    <text evidence="1">Heterodimer of a large membrane-associated beta subunit and a small pyruvoyl-containing alpha subunit.</text>
</comment>
<comment type="subcellular location">
    <subcellularLocation>
        <location evidence="1">Cell membrane</location>
        <topology evidence="1">Peripheral membrane protein</topology>
    </subcellularLocation>
</comment>
<comment type="PTM">
    <text evidence="1">Is synthesized initially as an inactive proenzyme. Formation of the active enzyme involves a self-maturation process in which the active site pyruvoyl group is generated from an internal serine residue via an autocatalytic post-translational modification. Two non-identical subunits are generated from the proenzyme in this reaction, and the pyruvate is formed at the N-terminus of the alpha chain, which is derived from the carboxyl end of the proenzyme. The post-translation cleavage follows an unusual pathway, termed non-hydrolytic serinolysis, in which the side chain hydroxyl group of the serine supplies its oxygen atom to form the C-terminus of the beta chain, while the remainder of the serine residue undergoes an oxidative deamination to produce ammonia and the pyruvoyl prosthetic group on the alpha chain.</text>
</comment>
<comment type="similarity">
    <text evidence="1">Belongs to the phosphatidylserine decarboxylase family. PSD-A subfamily.</text>
</comment>
<evidence type="ECO:0000255" key="1">
    <source>
        <dbReference type="HAMAP-Rule" id="MF_00664"/>
    </source>
</evidence>
<protein>
    <recommendedName>
        <fullName evidence="1">Phosphatidylserine decarboxylase proenzyme</fullName>
        <ecNumber evidence="1">4.1.1.65</ecNumber>
    </recommendedName>
    <component>
        <recommendedName>
            <fullName evidence="1">Phosphatidylserine decarboxylase alpha chain</fullName>
        </recommendedName>
    </component>
    <component>
        <recommendedName>
            <fullName evidence="1">Phosphatidylserine decarboxylase beta chain</fullName>
        </recommendedName>
    </component>
</protein>
<feature type="chain" id="PRO_0000029763" description="Phosphatidylserine decarboxylase beta chain" evidence="1">
    <location>
        <begin position="1"/>
        <end position="181"/>
    </location>
</feature>
<feature type="chain" id="PRO_0000029764" description="Phosphatidylserine decarboxylase alpha chain" evidence="1">
    <location>
        <begin position="182"/>
        <end position="216"/>
    </location>
</feature>
<feature type="active site" description="Schiff-base intermediate with substrate; via pyruvic acid" evidence="1">
    <location>
        <position position="182"/>
    </location>
</feature>
<feature type="site" description="Cleavage (non-hydrolytic); by autocatalysis" evidence="1">
    <location>
        <begin position="181"/>
        <end position="182"/>
    </location>
</feature>
<feature type="modified residue" description="Pyruvic acid (Ser); by autocatalysis" evidence="1">
    <location>
        <position position="182"/>
    </location>
</feature>
<dbReference type="EC" id="4.1.1.65" evidence="1"/>
<dbReference type="EMBL" id="CP000010">
    <property type="protein sequence ID" value="AAU49860.1"/>
    <property type="molecule type" value="Genomic_DNA"/>
</dbReference>
<dbReference type="RefSeq" id="WP_004196436.1">
    <property type="nucleotide sequence ID" value="NC_006348.1"/>
</dbReference>
<dbReference type="RefSeq" id="YP_103448.1">
    <property type="nucleotide sequence ID" value="NC_006348.1"/>
</dbReference>
<dbReference type="SMR" id="Q62IM1"/>
<dbReference type="KEGG" id="bma:BMA1845"/>
<dbReference type="PATRIC" id="fig|243160.12.peg.1881"/>
<dbReference type="eggNOG" id="COG0688">
    <property type="taxonomic scope" value="Bacteria"/>
</dbReference>
<dbReference type="HOGENOM" id="CLU_072492_0_0_4"/>
<dbReference type="UniPathway" id="UPA00558">
    <property type="reaction ID" value="UER00616"/>
</dbReference>
<dbReference type="Proteomes" id="UP000006693">
    <property type="component" value="Chromosome 1"/>
</dbReference>
<dbReference type="GO" id="GO:0005886">
    <property type="term" value="C:plasma membrane"/>
    <property type="evidence" value="ECO:0007669"/>
    <property type="project" value="UniProtKB-SubCell"/>
</dbReference>
<dbReference type="GO" id="GO:0004609">
    <property type="term" value="F:phosphatidylserine decarboxylase activity"/>
    <property type="evidence" value="ECO:0007669"/>
    <property type="project" value="UniProtKB-UniRule"/>
</dbReference>
<dbReference type="GO" id="GO:0006646">
    <property type="term" value="P:phosphatidylethanolamine biosynthetic process"/>
    <property type="evidence" value="ECO:0007669"/>
    <property type="project" value="UniProtKB-UniRule"/>
</dbReference>
<dbReference type="HAMAP" id="MF_00664">
    <property type="entry name" value="PS_decarb_PSD_A"/>
    <property type="match status" value="1"/>
</dbReference>
<dbReference type="InterPro" id="IPR003817">
    <property type="entry name" value="PS_Dcarbxylase"/>
</dbReference>
<dbReference type="InterPro" id="IPR033175">
    <property type="entry name" value="PSD-A"/>
</dbReference>
<dbReference type="NCBIfam" id="TIGR00164">
    <property type="entry name" value="AS_decarb"/>
    <property type="match status" value="1"/>
</dbReference>
<dbReference type="NCBIfam" id="NF003678">
    <property type="entry name" value="PRK05305.1-2"/>
    <property type="match status" value="1"/>
</dbReference>
<dbReference type="NCBIfam" id="NF003680">
    <property type="entry name" value="PRK05305.1-5"/>
    <property type="match status" value="1"/>
</dbReference>
<dbReference type="NCBIfam" id="NF003685">
    <property type="entry name" value="PRK05305.2-5"/>
    <property type="match status" value="1"/>
</dbReference>
<dbReference type="PANTHER" id="PTHR35809">
    <property type="entry name" value="ARCHAETIDYLSERINE DECARBOXYLASE PROENZYME-RELATED"/>
    <property type="match status" value="1"/>
</dbReference>
<dbReference type="PANTHER" id="PTHR35809:SF1">
    <property type="entry name" value="ARCHAETIDYLSERINE DECARBOXYLASE PROENZYME-RELATED"/>
    <property type="match status" value="1"/>
</dbReference>
<dbReference type="Pfam" id="PF02666">
    <property type="entry name" value="PS_Dcarbxylase"/>
    <property type="match status" value="1"/>
</dbReference>
<gene>
    <name evidence="1" type="primary">psd</name>
    <name type="ordered locus">BMA1845</name>
</gene>
<accession>Q62IM1</accession>
<reference key="1">
    <citation type="journal article" date="2004" name="Proc. Natl. Acad. Sci. U.S.A.">
        <title>Structural flexibility in the Burkholderia mallei genome.</title>
        <authorList>
            <person name="Nierman W.C."/>
            <person name="DeShazer D."/>
            <person name="Kim H.S."/>
            <person name="Tettelin H."/>
            <person name="Nelson K.E."/>
            <person name="Feldblyum T.V."/>
            <person name="Ulrich R.L."/>
            <person name="Ronning C.M."/>
            <person name="Brinkac L.M."/>
            <person name="Daugherty S.C."/>
            <person name="Davidsen T.D."/>
            <person name="DeBoy R.T."/>
            <person name="Dimitrov G."/>
            <person name="Dodson R.J."/>
            <person name="Durkin A.S."/>
            <person name="Gwinn M.L."/>
            <person name="Haft D.H."/>
            <person name="Khouri H.M."/>
            <person name="Kolonay J.F."/>
            <person name="Madupu R."/>
            <person name="Mohammoud Y."/>
            <person name="Nelson W.C."/>
            <person name="Radune D."/>
            <person name="Romero C.M."/>
            <person name="Sarria S."/>
            <person name="Selengut J."/>
            <person name="Shamblin C."/>
            <person name="Sullivan S.A."/>
            <person name="White O."/>
            <person name="Yu Y."/>
            <person name="Zafar N."/>
            <person name="Zhou L."/>
            <person name="Fraser C.M."/>
        </authorList>
    </citation>
    <scope>NUCLEOTIDE SEQUENCE [LARGE SCALE GENOMIC DNA]</scope>
    <source>
        <strain>ATCC 23344</strain>
    </source>
</reference>